<sequence>MAKFIQHIGLVAPLDAANVDTDAIIPKQFLQKVTRTGFGQHLFNDWRFLDDAGKVPNPDFVLNLPRYQGATILLARENFGCGSSREHAPWALTDFGFKVVIAPSFADIFYGNAFNNQLLPVTLSEADIDTLFQLVKENEGIEFVVDLEQQTVNAGGKSYAFEIDPFRRHCMINGLDSIGLTLQHEHNISAYEKQQPEFLR</sequence>
<protein>
    <recommendedName>
        <fullName evidence="1">3-isopropylmalate dehydratase small subunit</fullName>
        <ecNumber evidence="1">4.2.1.33</ecNumber>
    </recommendedName>
    <alternativeName>
        <fullName evidence="1">Alpha-IPM isomerase</fullName>
        <shortName evidence="1">IPMI</shortName>
    </alternativeName>
    <alternativeName>
        <fullName evidence="1">Isopropylmalate isomerase</fullName>
    </alternativeName>
</protein>
<comment type="function">
    <text evidence="1">Catalyzes the isomerization between 2-isopropylmalate and 3-isopropylmalate, via the formation of 2-isopropylmaleate.</text>
</comment>
<comment type="catalytic activity">
    <reaction evidence="1">
        <text>(2R,3S)-3-isopropylmalate = (2S)-2-isopropylmalate</text>
        <dbReference type="Rhea" id="RHEA:32287"/>
        <dbReference type="ChEBI" id="CHEBI:1178"/>
        <dbReference type="ChEBI" id="CHEBI:35121"/>
        <dbReference type="EC" id="4.2.1.33"/>
    </reaction>
</comment>
<comment type="pathway">
    <text evidence="1">Amino-acid biosynthesis; L-leucine biosynthesis; L-leucine from 3-methyl-2-oxobutanoate: step 2/4.</text>
</comment>
<comment type="subunit">
    <text evidence="1">Heterodimer of LeuC and LeuD.</text>
</comment>
<comment type="similarity">
    <text evidence="1">Belongs to the LeuD family. LeuD type 1 subfamily.</text>
</comment>
<gene>
    <name evidence="1" type="primary">leuD</name>
    <name type="ordered locus">YPTS_0695</name>
</gene>
<name>LEUD_YERPB</name>
<reference key="1">
    <citation type="submission" date="2008-04" db="EMBL/GenBank/DDBJ databases">
        <title>Complete sequence of Yersinia pseudotuberculosis PB1/+.</title>
        <authorList>
            <person name="Copeland A."/>
            <person name="Lucas S."/>
            <person name="Lapidus A."/>
            <person name="Glavina del Rio T."/>
            <person name="Dalin E."/>
            <person name="Tice H."/>
            <person name="Bruce D."/>
            <person name="Goodwin L."/>
            <person name="Pitluck S."/>
            <person name="Munk A.C."/>
            <person name="Brettin T."/>
            <person name="Detter J.C."/>
            <person name="Han C."/>
            <person name="Tapia R."/>
            <person name="Schmutz J."/>
            <person name="Larimer F."/>
            <person name="Land M."/>
            <person name="Hauser L."/>
            <person name="Challacombe J.F."/>
            <person name="Green L."/>
            <person name="Lindler L.E."/>
            <person name="Nikolich M.P."/>
            <person name="Richardson P."/>
        </authorList>
    </citation>
    <scope>NUCLEOTIDE SEQUENCE [LARGE SCALE GENOMIC DNA]</scope>
    <source>
        <strain>PB1/+</strain>
    </source>
</reference>
<feature type="chain" id="PRO_1000135842" description="3-isopropylmalate dehydratase small subunit">
    <location>
        <begin position="1"/>
        <end position="200"/>
    </location>
</feature>
<keyword id="KW-0028">Amino-acid biosynthesis</keyword>
<keyword id="KW-0100">Branched-chain amino acid biosynthesis</keyword>
<keyword id="KW-0432">Leucine biosynthesis</keyword>
<keyword id="KW-0456">Lyase</keyword>
<proteinExistence type="inferred from homology"/>
<accession>B2K4C6</accession>
<dbReference type="EC" id="4.2.1.33" evidence="1"/>
<dbReference type="EMBL" id="CP001048">
    <property type="protein sequence ID" value="ACC87679.1"/>
    <property type="molecule type" value="Genomic_DNA"/>
</dbReference>
<dbReference type="RefSeq" id="WP_002210456.1">
    <property type="nucleotide sequence ID" value="NZ_CP009780.1"/>
</dbReference>
<dbReference type="SMR" id="B2K4C6"/>
<dbReference type="GeneID" id="57974082"/>
<dbReference type="KEGG" id="ypb:YPTS_0695"/>
<dbReference type="PATRIC" id="fig|502801.10.peg.24"/>
<dbReference type="UniPathway" id="UPA00048">
    <property type="reaction ID" value="UER00071"/>
</dbReference>
<dbReference type="GO" id="GO:0009316">
    <property type="term" value="C:3-isopropylmalate dehydratase complex"/>
    <property type="evidence" value="ECO:0007669"/>
    <property type="project" value="InterPro"/>
</dbReference>
<dbReference type="GO" id="GO:0003861">
    <property type="term" value="F:3-isopropylmalate dehydratase activity"/>
    <property type="evidence" value="ECO:0007669"/>
    <property type="project" value="UniProtKB-UniRule"/>
</dbReference>
<dbReference type="GO" id="GO:0009098">
    <property type="term" value="P:L-leucine biosynthetic process"/>
    <property type="evidence" value="ECO:0007669"/>
    <property type="project" value="UniProtKB-UniRule"/>
</dbReference>
<dbReference type="CDD" id="cd01577">
    <property type="entry name" value="IPMI_Swivel"/>
    <property type="match status" value="1"/>
</dbReference>
<dbReference type="FunFam" id="3.20.19.10:FF:000003">
    <property type="entry name" value="3-isopropylmalate dehydratase small subunit"/>
    <property type="match status" value="1"/>
</dbReference>
<dbReference type="Gene3D" id="3.20.19.10">
    <property type="entry name" value="Aconitase, domain 4"/>
    <property type="match status" value="1"/>
</dbReference>
<dbReference type="HAMAP" id="MF_01031">
    <property type="entry name" value="LeuD_type1"/>
    <property type="match status" value="1"/>
</dbReference>
<dbReference type="InterPro" id="IPR004431">
    <property type="entry name" value="3-IsopropMal_deHydase_ssu"/>
</dbReference>
<dbReference type="InterPro" id="IPR015928">
    <property type="entry name" value="Aconitase/3IPM_dehydase_swvl"/>
</dbReference>
<dbReference type="InterPro" id="IPR000573">
    <property type="entry name" value="AconitaseA/IPMdHydase_ssu_swvl"/>
</dbReference>
<dbReference type="InterPro" id="IPR033940">
    <property type="entry name" value="IPMI_Swivel"/>
</dbReference>
<dbReference type="InterPro" id="IPR050075">
    <property type="entry name" value="LeuD"/>
</dbReference>
<dbReference type="NCBIfam" id="TIGR00171">
    <property type="entry name" value="leuD"/>
    <property type="match status" value="1"/>
</dbReference>
<dbReference type="NCBIfam" id="NF002458">
    <property type="entry name" value="PRK01641.1"/>
    <property type="match status" value="1"/>
</dbReference>
<dbReference type="PANTHER" id="PTHR43345:SF5">
    <property type="entry name" value="3-ISOPROPYLMALATE DEHYDRATASE SMALL SUBUNIT"/>
    <property type="match status" value="1"/>
</dbReference>
<dbReference type="PANTHER" id="PTHR43345">
    <property type="entry name" value="3-ISOPROPYLMALATE DEHYDRATASE SMALL SUBUNIT 2-RELATED-RELATED"/>
    <property type="match status" value="1"/>
</dbReference>
<dbReference type="Pfam" id="PF00694">
    <property type="entry name" value="Aconitase_C"/>
    <property type="match status" value="1"/>
</dbReference>
<dbReference type="SUPFAM" id="SSF52016">
    <property type="entry name" value="LeuD/IlvD-like"/>
    <property type="match status" value="1"/>
</dbReference>
<organism>
    <name type="scientific">Yersinia pseudotuberculosis serotype IB (strain PB1/+)</name>
    <dbReference type="NCBI Taxonomy" id="502801"/>
    <lineage>
        <taxon>Bacteria</taxon>
        <taxon>Pseudomonadati</taxon>
        <taxon>Pseudomonadota</taxon>
        <taxon>Gammaproteobacteria</taxon>
        <taxon>Enterobacterales</taxon>
        <taxon>Yersiniaceae</taxon>
        <taxon>Yersinia</taxon>
    </lineage>
</organism>
<evidence type="ECO:0000255" key="1">
    <source>
        <dbReference type="HAMAP-Rule" id="MF_01031"/>
    </source>
</evidence>